<proteinExistence type="inferred from homology"/>
<keyword id="KW-0030">Aminoacyl-tRNA synthetase</keyword>
<keyword id="KW-0067">ATP-binding</keyword>
<keyword id="KW-0175">Coiled coil</keyword>
<keyword id="KW-0963">Cytoplasm</keyword>
<keyword id="KW-0436">Ligase</keyword>
<keyword id="KW-0547">Nucleotide-binding</keyword>
<keyword id="KW-0648">Protein biosynthesis</keyword>
<sequence>MTTLASSYDPSSFESRLYAQWEAAGYFVPSDTGEPYTVLLPPPNVTGTLHMGHAFQQTLMDALVRYHRMRGYDTLWQVGTDHAGIATEMVVSRNLALEGKGETRDSLGREGFIAKVWEWKAASGDTIERQMRRLGTSSDWSRSTFTMDPQPSAAVNEAFVRWYEQGLIYRGQRLVNWDPVLKTAISDLEVENVEEDGFLWSIRYPLADGVTYEHIEHDADGNETLRETRDYLVVATTRPETMLGDTAVMVHPEDARYLTLHTARIVLPLTGRHVPVITDDYVDRAFGTGVVKVTPAHDFNDYQVGERHNLPLVNLFTADAKIIDPRKQYPDDESPFVNAGIDWRELDQIQRKRLGQHLAYKIPAQYIGLDRYDARKLVLSELEDLSILVETKPHKLQVPRGDRTGQVIEPYLTDQWFVKMDALAKRGLELVESGQIQFVPPNWINTYRHWMENIQDWCISRQLWWGHRIPAWFDDAGHCHVGHDEAEVRAKHGLGAEIALHQDSDVLETWFSSQLWPFSTLGWPDSQAMAERGFARYLPSSVLVTGFDIIFFWVARMIMATDSFTGQVPFRDVYITGLIRDAQGQKMSKSKGNVLDPLDIIDGISIEDLVAKRTNGLMQPRMAEKIEKATRKEFPDGIIAHGADALRFTIAALATHGRDIKFDLGRAEGYKNFCNKLWNATRFVLMNTEGARFTGVPQPRTEAEKWILARLDKVTAETHAHYANYRFDLLAQSLYEFAWNAFCDWFVELAKPALNNQDTDAAASTRHTLLYVLESLLRLLHPLTPFVTEELWQQVVPRLGITTATISLQRFPQVGDVDTSGYATAEADVEWLKSMVSALRRVRSELNVPPSKQVRLLLQADTADERPRVARFASQLSFLLKLERIDWLDAGQDTPPSAAAIVGELTLLVPLEGLVDMDAERMRLDKEIKRVKGEIGKCNGKLGNATFVQNAPAVVVDQERARLADWTTQLAGLREQRGKL</sequence>
<gene>
    <name evidence="1" type="primary">valS</name>
    <name type="ordered locus">PXO_02657</name>
</gene>
<comment type="function">
    <text evidence="1">Catalyzes the attachment of valine to tRNA(Val). As ValRS can inadvertently accommodate and process structurally similar amino acids such as threonine, to avoid such errors, it has a 'posttransfer' editing activity that hydrolyzes mischarged Thr-tRNA(Val) in a tRNA-dependent manner.</text>
</comment>
<comment type="catalytic activity">
    <reaction evidence="1">
        <text>tRNA(Val) + L-valine + ATP = L-valyl-tRNA(Val) + AMP + diphosphate</text>
        <dbReference type="Rhea" id="RHEA:10704"/>
        <dbReference type="Rhea" id="RHEA-COMP:9672"/>
        <dbReference type="Rhea" id="RHEA-COMP:9708"/>
        <dbReference type="ChEBI" id="CHEBI:30616"/>
        <dbReference type="ChEBI" id="CHEBI:33019"/>
        <dbReference type="ChEBI" id="CHEBI:57762"/>
        <dbReference type="ChEBI" id="CHEBI:78442"/>
        <dbReference type="ChEBI" id="CHEBI:78537"/>
        <dbReference type="ChEBI" id="CHEBI:456215"/>
        <dbReference type="EC" id="6.1.1.9"/>
    </reaction>
</comment>
<comment type="subunit">
    <text evidence="1">Monomer.</text>
</comment>
<comment type="subcellular location">
    <subcellularLocation>
        <location evidence="1">Cytoplasm</location>
    </subcellularLocation>
</comment>
<comment type="domain">
    <text evidence="1">ValRS has two distinct active sites: one for aminoacylation and one for editing. The misactivated threonine is translocated from the active site to the editing site.</text>
</comment>
<comment type="domain">
    <text evidence="1">The C-terminal coiled-coil domain is crucial for aminoacylation activity.</text>
</comment>
<comment type="similarity">
    <text evidence="1">Belongs to the class-I aminoacyl-tRNA synthetase family. ValS type 1 subfamily.</text>
</comment>
<organism>
    <name type="scientific">Xanthomonas oryzae pv. oryzae (strain PXO99A)</name>
    <dbReference type="NCBI Taxonomy" id="360094"/>
    <lineage>
        <taxon>Bacteria</taxon>
        <taxon>Pseudomonadati</taxon>
        <taxon>Pseudomonadota</taxon>
        <taxon>Gammaproteobacteria</taxon>
        <taxon>Lysobacterales</taxon>
        <taxon>Lysobacteraceae</taxon>
        <taxon>Xanthomonas</taxon>
    </lineage>
</organism>
<accession>B2SPF0</accession>
<dbReference type="EC" id="6.1.1.9" evidence="1"/>
<dbReference type="EMBL" id="CP000967">
    <property type="protein sequence ID" value="ACD61008.1"/>
    <property type="molecule type" value="Genomic_DNA"/>
</dbReference>
<dbReference type="RefSeq" id="WP_011257710.1">
    <property type="nucleotide sequence ID" value="NC_010717.2"/>
</dbReference>
<dbReference type="SMR" id="B2SPF0"/>
<dbReference type="KEGG" id="xop:PXO_02657"/>
<dbReference type="eggNOG" id="COG0525">
    <property type="taxonomic scope" value="Bacteria"/>
</dbReference>
<dbReference type="HOGENOM" id="CLU_001493_0_2_6"/>
<dbReference type="Proteomes" id="UP000001740">
    <property type="component" value="Chromosome"/>
</dbReference>
<dbReference type="GO" id="GO:0005829">
    <property type="term" value="C:cytosol"/>
    <property type="evidence" value="ECO:0007669"/>
    <property type="project" value="TreeGrafter"/>
</dbReference>
<dbReference type="GO" id="GO:0002161">
    <property type="term" value="F:aminoacyl-tRNA deacylase activity"/>
    <property type="evidence" value="ECO:0007669"/>
    <property type="project" value="InterPro"/>
</dbReference>
<dbReference type="GO" id="GO:0005524">
    <property type="term" value="F:ATP binding"/>
    <property type="evidence" value="ECO:0007669"/>
    <property type="project" value="UniProtKB-UniRule"/>
</dbReference>
<dbReference type="GO" id="GO:0004832">
    <property type="term" value="F:valine-tRNA ligase activity"/>
    <property type="evidence" value="ECO:0007669"/>
    <property type="project" value="UniProtKB-UniRule"/>
</dbReference>
<dbReference type="GO" id="GO:0006438">
    <property type="term" value="P:valyl-tRNA aminoacylation"/>
    <property type="evidence" value="ECO:0007669"/>
    <property type="project" value="UniProtKB-UniRule"/>
</dbReference>
<dbReference type="CDD" id="cd07962">
    <property type="entry name" value="Anticodon_Ia_Val"/>
    <property type="match status" value="1"/>
</dbReference>
<dbReference type="FunFam" id="1.10.287.380:FF:000001">
    <property type="entry name" value="Valine--tRNA ligase"/>
    <property type="match status" value="1"/>
</dbReference>
<dbReference type="FunFam" id="3.40.50.620:FF:000032">
    <property type="entry name" value="Valine--tRNA ligase"/>
    <property type="match status" value="1"/>
</dbReference>
<dbReference type="FunFam" id="3.40.50.620:FF:000098">
    <property type="entry name" value="Valine--tRNA ligase"/>
    <property type="match status" value="1"/>
</dbReference>
<dbReference type="Gene3D" id="3.40.50.620">
    <property type="entry name" value="HUPs"/>
    <property type="match status" value="2"/>
</dbReference>
<dbReference type="Gene3D" id="1.10.730.10">
    <property type="entry name" value="Isoleucyl-tRNA Synthetase, Domain 1"/>
    <property type="match status" value="1"/>
</dbReference>
<dbReference type="Gene3D" id="1.10.287.380">
    <property type="entry name" value="Valyl-tRNA synthetase, C-terminal domain"/>
    <property type="match status" value="1"/>
</dbReference>
<dbReference type="Gene3D" id="3.90.740.10">
    <property type="entry name" value="Valyl/Leucyl/Isoleucyl-tRNA synthetase, editing domain"/>
    <property type="match status" value="2"/>
</dbReference>
<dbReference type="HAMAP" id="MF_02004">
    <property type="entry name" value="Val_tRNA_synth_type1"/>
    <property type="match status" value="1"/>
</dbReference>
<dbReference type="InterPro" id="IPR001412">
    <property type="entry name" value="aa-tRNA-synth_I_CS"/>
</dbReference>
<dbReference type="InterPro" id="IPR002300">
    <property type="entry name" value="aa-tRNA-synth_Ia"/>
</dbReference>
<dbReference type="InterPro" id="IPR033705">
    <property type="entry name" value="Anticodon_Ia_Val"/>
</dbReference>
<dbReference type="InterPro" id="IPR013155">
    <property type="entry name" value="M/V/L/I-tRNA-synth_anticd-bd"/>
</dbReference>
<dbReference type="InterPro" id="IPR014729">
    <property type="entry name" value="Rossmann-like_a/b/a_fold"/>
</dbReference>
<dbReference type="InterPro" id="IPR010978">
    <property type="entry name" value="tRNA-bd_arm"/>
</dbReference>
<dbReference type="InterPro" id="IPR009080">
    <property type="entry name" value="tRNAsynth_Ia_anticodon-bd"/>
</dbReference>
<dbReference type="InterPro" id="IPR037118">
    <property type="entry name" value="Val-tRNA_synth_C_sf"/>
</dbReference>
<dbReference type="InterPro" id="IPR019499">
    <property type="entry name" value="Val-tRNA_synth_tRNA-bd"/>
</dbReference>
<dbReference type="InterPro" id="IPR009008">
    <property type="entry name" value="Val/Leu/Ile-tRNA-synth_edit"/>
</dbReference>
<dbReference type="InterPro" id="IPR002303">
    <property type="entry name" value="Valyl-tRNA_ligase"/>
</dbReference>
<dbReference type="NCBIfam" id="NF004349">
    <property type="entry name" value="PRK05729.1"/>
    <property type="match status" value="1"/>
</dbReference>
<dbReference type="NCBIfam" id="TIGR00422">
    <property type="entry name" value="valS"/>
    <property type="match status" value="1"/>
</dbReference>
<dbReference type="PANTHER" id="PTHR11946:SF93">
    <property type="entry name" value="VALINE--TRNA LIGASE, CHLOROPLASTIC_MITOCHONDRIAL 2"/>
    <property type="match status" value="1"/>
</dbReference>
<dbReference type="PANTHER" id="PTHR11946">
    <property type="entry name" value="VALYL-TRNA SYNTHETASES"/>
    <property type="match status" value="1"/>
</dbReference>
<dbReference type="Pfam" id="PF08264">
    <property type="entry name" value="Anticodon_1"/>
    <property type="match status" value="1"/>
</dbReference>
<dbReference type="Pfam" id="PF00133">
    <property type="entry name" value="tRNA-synt_1"/>
    <property type="match status" value="1"/>
</dbReference>
<dbReference type="Pfam" id="PF10458">
    <property type="entry name" value="Val_tRNA-synt_C"/>
    <property type="match status" value="1"/>
</dbReference>
<dbReference type="PRINTS" id="PR00986">
    <property type="entry name" value="TRNASYNTHVAL"/>
</dbReference>
<dbReference type="SUPFAM" id="SSF47323">
    <property type="entry name" value="Anticodon-binding domain of a subclass of class I aminoacyl-tRNA synthetases"/>
    <property type="match status" value="1"/>
</dbReference>
<dbReference type="SUPFAM" id="SSF52374">
    <property type="entry name" value="Nucleotidylyl transferase"/>
    <property type="match status" value="1"/>
</dbReference>
<dbReference type="SUPFAM" id="SSF46589">
    <property type="entry name" value="tRNA-binding arm"/>
    <property type="match status" value="1"/>
</dbReference>
<dbReference type="SUPFAM" id="SSF50677">
    <property type="entry name" value="ValRS/IleRS/LeuRS editing domain"/>
    <property type="match status" value="1"/>
</dbReference>
<dbReference type="PROSITE" id="PS00178">
    <property type="entry name" value="AA_TRNA_LIGASE_I"/>
    <property type="match status" value="1"/>
</dbReference>
<protein>
    <recommendedName>
        <fullName evidence="1">Valine--tRNA ligase</fullName>
        <ecNumber evidence="1">6.1.1.9</ecNumber>
    </recommendedName>
    <alternativeName>
        <fullName evidence="1">Valyl-tRNA synthetase</fullName>
        <shortName evidence="1">ValRS</shortName>
    </alternativeName>
</protein>
<feature type="chain" id="PRO_1000189248" description="Valine--tRNA ligase">
    <location>
        <begin position="1"/>
        <end position="980"/>
    </location>
</feature>
<feature type="coiled-coil region" evidence="1">
    <location>
        <begin position="914"/>
        <end position="980"/>
    </location>
</feature>
<feature type="short sequence motif" description="'HIGH' region">
    <location>
        <begin position="43"/>
        <end position="53"/>
    </location>
</feature>
<feature type="short sequence motif" description="'KMSKS' region">
    <location>
        <begin position="586"/>
        <end position="590"/>
    </location>
</feature>
<feature type="binding site" evidence="1">
    <location>
        <position position="589"/>
    </location>
    <ligand>
        <name>ATP</name>
        <dbReference type="ChEBI" id="CHEBI:30616"/>
    </ligand>
</feature>
<evidence type="ECO:0000255" key="1">
    <source>
        <dbReference type="HAMAP-Rule" id="MF_02004"/>
    </source>
</evidence>
<name>SYV_XANOP</name>
<reference key="1">
    <citation type="journal article" date="2008" name="BMC Genomics">
        <title>Genome sequence and rapid evolution of the rice pathogen Xanthomonas oryzae pv. oryzae PXO99A.</title>
        <authorList>
            <person name="Salzberg S.L."/>
            <person name="Sommer D.D."/>
            <person name="Schatz M.C."/>
            <person name="Phillippy A.M."/>
            <person name="Rabinowicz P.D."/>
            <person name="Tsuge S."/>
            <person name="Furutani A."/>
            <person name="Ochiai H."/>
            <person name="Delcher A.L."/>
            <person name="Kelley D."/>
            <person name="Madupu R."/>
            <person name="Puiu D."/>
            <person name="Radune D."/>
            <person name="Shumway M."/>
            <person name="Trapnell C."/>
            <person name="Aparna G."/>
            <person name="Jha G."/>
            <person name="Pandey A."/>
            <person name="Patil P.B."/>
            <person name="Ishihara H."/>
            <person name="Meyer D.F."/>
            <person name="Szurek B."/>
            <person name="Verdier V."/>
            <person name="Koebnik R."/>
            <person name="Dow J.M."/>
            <person name="Ryan R.P."/>
            <person name="Hirata H."/>
            <person name="Tsuyumu S."/>
            <person name="Won Lee S."/>
            <person name="Seo Y.-S."/>
            <person name="Sriariyanum M."/>
            <person name="Ronald P.C."/>
            <person name="Sonti R.V."/>
            <person name="Van Sluys M.-A."/>
            <person name="Leach J.E."/>
            <person name="White F.F."/>
            <person name="Bogdanove A.J."/>
        </authorList>
    </citation>
    <scope>NUCLEOTIDE SEQUENCE [LARGE SCALE GENOMIC DNA]</scope>
    <source>
        <strain>PXO99A</strain>
    </source>
</reference>